<gene>
    <name evidence="1" type="primary">sfsA</name>
    <name type="ordered locus">Hhal_1253</name>
</gene>
<sequence>MEFEQVLTEARLVRRYRRFLADVEDASGQQWTVHCPNTGSMLGCTEPGARVWLSHSTRPGRKYAQTWELVELPGEVVVGVHTGRANALVGEALDAGLLPELSGYASRRREVRVPDAPMRADWLLEGHPGGEPPCFVEVKNVTAAVEHGRALFPDAVTERGRRHLEVLTEWVRGGGRAALVFCVQRSDAQEVRPAEAIDPRYADALRAAAAEGVEIRAVRLHPSATGIRPDCALPVHYQEEP</sequence>
<name>SFSA_HALHL</name>
<reference key="1">
    <citation type="submission" date="2006-12" db="EMBL/GenBank/DDBJ databases">
        <title>Complete sequence of Halorhodospira halophila SL1.</title>
        <authorList>
            <consortium name="US DOE Joint Genome Institute"/>
            <person name="Copeland A."/>
            <person name="Lucas S."/>
            <person name="Lapidus A."/>
            <person name="Barry K."/>
            <person name="Detter J.C."/>
            <person name="Glavina del Rio T."/>
            <person name="Hammon N."/>
            <person name="Israni S."/>
            <person name="Dalin E."/>
            <person name="Tice H."/>
            <person name="Pitluck S."/>
            <person name="Saunders E."/>
            <person name="Brettin T."/>
            <person name="Bruce D."/>
            <person name="Han C."/>
            <person name="Tapia R."/>
            <person name="Schmutz J."/>
            <person name="Larimer F."/>
            <person name="Land M."/>
            <person name="Hauser L."/>
            <person name="Kyrpides N."/>
            <person name="Mikhailova N."/>
            <person name="Hoff W."/>
            <person name="Richardson P."/>
        </authorList>
    </citation>
    <scope>NUCLEOTIDE SEQUENCE [LARGE SCALE GENOMIC DNA]</scope>
    <source>
        <strain>DSM 244 / SL1</strain>
    </source>
</reference>
<feature type="chain" id="PRO_1000007989" description="Sugar fermentation stimulation protein homolog">
    <location>
        <begin position="1"/>
        <end position="241"/>
    </location>
</feature>
<dbReference type="EMBL" id="CP000544">
    <property type="protein sequence ID" value="ABM62028.1"/>
    <property type="molecule type" value="Genomic_DNA"/>
</dbReference>
<dbReference type="RefSeq" id="WP_011814051.1">
    <property type="nucleotide sequence ID" value="NC_008789.1"/>
</dbReference>
<dbReference type="SMR" id="A1WWG6"/>
<dbReference type="STRING" id="349124.Hhal_1253"/>
<dbReference type="KEGG" id="hha:Hhal_1253"/>
<dbReference type="eggNOG" id="COG1489">
    <property type="taxonomic scope" value="Bacteria"/>
</dbReference>
<dbReference type="HOGENOM" id="CLU_052299_2_0_6"/>
<dbReference type="OrthoDB" id="9802365at2"/>
<dbReference type="Proteomes" id="UP000000647">
    <property type="component" value="Chromosome"/>
</dbReference>
<dbReference type="GO" id="GO:0003677">
    <property type="term" value="F:DNA binding"/>
    <property type="evidence" value="ECO:0007669"/>
    <property type="project" value="InterPro"/>
</dbReference>
<dbReference type="CDD" id="cd22359">
    <property type="entry name" value="SfsA-like_bacterial"/>
    <property type="match status" value="1"/>
</dbReference>
<dbReference type="FunFam" id="2.40.50.580:FF:000001">
    <property type="entry name" value="Sugar fermentation stimulation protein A"/>
    <property type="match status" value="1"/>
</dbReference>
<dbReference type="Gene3D" id="2.40.50.580">
    <property type="match status" value="1"/>
</dbReference>
<dbReference type="Gene3D" id="3.40.1350.60">
    <property type="match status" value="1"/>
</dbReference>
<dbReference type="HAMAP" id="MF_00095">
    <property type="entry name" value="SfsA"/>
    <property type="match status" value="1"/>
</dbReference>
<dbReference type="InterPro" id="IPR005224">
    <property type="entry name" value="SfsA"/>
</dbReference>
<dbReference type="InterPro" id="IPR040452">
    <property type="entry name" value="SfsA_C"/>
</dbReference>
<dbReference type="InterPro" id="IPR041465">
    <property type="entry name" value="SfsA_N"/>
</dbReference>
<dbReference type="NCBIfam" id="TIGR00230">
    <property type="entry name" value="sfsA"/>
    <property type="match status" value="1"/>
</dbReference>
<dbReference type="PANTHER" id="PTHR30545">
    <property type="entry name" value="SUGAR FERMENTATION STIMULATION PROTEIN A"/>
    <property type="match status" value="1"/>
</dbReference>
<dbReference type="PANTHER" id="PTHR30545:SF2">
    <property type="entry name" value="SUGAR FERMENTATION STIMULATION PROTEIN A"/>
    <property type="match status" value="1"/>
</dbReference>
<dbReference type="Pfam" id="PF03749">
    <property type="entry name" value="SfsA"/>
    <property type="match status" value="1"/>
</dbReference>
<dbReference type="Pfam" id="PF17746">
    <property type="entry name" value="SfsA_N"/>
    <property type="match status" value="1"/>
</dbReference>
<comment type="similarity">
    <text evidence="1">Belongs to the SfsA family.</text>
</comment>
<accession>A1WWG6</accession>
<proteinExistence type="inferred from homology"/>
<evidence type="ECO:0000255" key="1">
    <source>
        <dbReference type="HAMAP-Rule" id="MF_00095"/>
    </source>
</evidence>
<keyword id="KW-1185">Reference proteome</keyword>
<organism>
    <name type="scientific">Halorhodospira halophila (strain DSM 244 / SL1)</name>
    <name type="common">Ectothiorhodospira halophila (strain DSM 244 / SL1)</name>
    <dbReference type="NCBI Taxonomy" id="349124"/>
    <lineage>
        <taxon>Bacteria</taxon>
        <taxon>Pseudomonadati</taxon>
        <taxon>Pseudomonadota</taxon>
        <taxon>Gammaproteobacteria</taxon>
        <taxon>Chromatiales</taxon>
        <taxon>Ectothiorhodospiraceae</taxon>
        <taxon>Halorhodospira</taxon>
    </lineage>
</organism>
<protein>
    <recommendedName>
        <fullName evidence="1">Sugar fermentation stimulation protein homolog</fullName>
    </recommendedName>
</protein>